<name>RL29_SPICI</name>
<gene>
    <name evidence="1 4" type="primary">rpmC</name>
</gene>
<proteinExistence type="evidence at protein level"/>
<organism>
    <name type="scientific">Spiroplasma citri</name>
    <dbReference type="NCBI Taxonomy" id="2133"/>
    <lineage>
        <taxon>Bacteria</taxon>
        <taxon>Bacillati</taxon>
        <taxon>Mycoplasmatota</taxon>
        <taxon>Mollicutes</taxon>
        <taxon>Entomoplasmatales</taxon>
        <taxon>Spiroplasmataceae</taxon>
        <taxon>Spiroplasma</taxon>
    </lineage>
</organism>
<comment type="function">
    <text evidence="3 5">Specifically binds a DNA inverted repeat sequence (IRS) found downstream of rpsB in one of the ribosomal subunit operons (for genes rpsB, tsf, and unknown gene x) (PubMed:9733727). Might be involved in regulation of transcription of the rpsB operon; the IRS may be a control element to attenuate transcription (Probable).</text>
</comment>
<comment type="subunit">
    <text evidence="3 5">Forms homomultimers (Probable). Part of the ribosome; radioactive IRS binds to purified ribosomes (PubMed:9733727).</text>
</comment>
<comment type="similarity">
    <text evidence="1">Belongs to the universal ribosomal protein uL29 family.</text>
</comment>
<protein>
    <recommendedName>
        <fullName evidence="1">Large ribosomal subunit protein uL29</fullName>
    </recommendedName>
    <alternativeName>
        <fullName>50S ribosomal protein L29</fullName>
    </alternativeName>
    <alternativeName>
        <fullName evidence="4">P46</fullName>
    </alternativeName>
</protein>
<accession>O31163</accession>
<feature type="chain" id="PRO_0000130454" description="Large ribosomal subunit protein uL29">
    <location>
        <begin position="1"/>
        <end position="339"/>
    </location>
</feature>
<feature type="region of interest" description="Large ribosomal subunit protein uL29" evidence="1">
    <location>
        <begin position="1"/>
        <end position="96"/>
    </location>
</feature>
<feature type="region of interest" description="Unknown">
    <location>
        <begin position="97"/>
        <end position="339"/>
    </location>
</feature>
<feature type="region of interest" description="Disordered" evidence="2">
    <location>
        <begin position="129"/>
        <end position="254"/>
    </location>
</feature>
<feature type="region of interest" description="Disordered" evidence="2">
    <location>
        <begin position="311"/>
        <end position="339"/>
    </location>
</feature>
<feature type="compositionally biased region" description="Low complexity" evidence="2">
    <location>
        <begin position="145"/>
        <end position="156"/>
    </location>
</feature>
<feature type="compositionally biased region" description="Basic and acidic residues" evidence="2">
    <location>
        <begin position="157"/>
        <end position="170"/>
    </location>
</feature>
<feature type="compositionally biased region" description="Low complexity" evidence="2">
    <location>
        <begin position="171"/>
        <end position="182"/>
    </location>
</feature>
<feature type="compositionally biased region" description="Basic and acidic residues" evidence="2">
    <location>
        <begin position="185"/>
        <end position="210"/>
    </location>
</feature>
<feature type="compositionally biased region" description="Low complexity" evidence="2">
    <location>
        <begin position="217"/>
        <end position="238"/>
    </location>
</feature>
<feature type="compositionally biased region" description="Basic and acidic residues" evidence="2">
    <location>
        <begin position="239"/>
        <end position="248"/>
    </location>
</feature>
<evidence type="ECO:0000255" key="1">
    <source>
        <dbReference type="HAMAP-Rule" id="MF_00374"/>
    </source>
</evidence>
<evidence type="ECO:0000256" key="2">
    <source>
        <dbReference type="SAM" id="MobiDB-lite"/>
    </source>
</evidence>
<evidence type="ECO:0000269" key="3">
    <source>
    </source>
</evidence>
<evidence type="ECO:0000303" key="4">
    <source>
    </source>
</evidence>
<evidence type="ECO:0000305" key="5">
    <source>
    </source>
</evidence>
<reference key="1">
    <citation type="journal article" date="1998" name="J. Biol. Chem.">
        <title>Purification, cloning, and preliminary characterization of a Spiroplasma citri ribosomal protein with DNA binding capacity.</title>
        <authorList>
            <person name="Le Dantec L."/>
            <person name="Castroviejo M."/>
            <person name="Bove J.M."/>
            <person name="Saillard C."/>
        </authorList>
    </citation>
    <scope>NUCLEOTIDE SEQUENCE [GENOMIC DNA]</scope>
    <scope>PROTEIN SEQUENCE OF 59-70; 289-295 AND 302-311</scope>
    <scope>FUNCTION</scope>
    <scope>SUBUNIT</scope>
    <scope>DNA-BINDING</scope>
    <source>
        <strain>ATCC 27556 / NCPPB 2647 / R8A2</strain>
    </source>
</reference>
<sequence>MNDLTKKSVEELKKLEEESRAELFALRFQSAMGNLEKPHRIGELKNQIARILTILSARKNSGENTAINVKVNLNETYAKIEKESQAFAKQRKAKIEQMMAEQQAAEGKMANLMDLPVNDAMDLTEEQAVVSTPTGETNGLDEQKAPVAAKKPAAAKDFPKQKDVVEEKTATGKPAAPSAKKAPVAKKDVAQETKTDKDAALKALIKEKAAAKKPAAKSKTSTPSGKTTVTVKSVTSAKADIEVPKETSKPVPTKTVKKAAELNAKEKLVAIKSSVAMGGTAKEPGSGVKIDLELKAKDPNAKEYTYGTNWKENRDKILTASKTTKKADDKTTKKGTGKK</sequence>
<dbReference type="EMBL" id="AF031160">
    <property type="protein sequence ID" value="AAC35872.1"/>
    <property type="molecule type" value="Genomic_DNA"/>
</dbReference>
<dbReference type="RefSeq" id="WP_071936949.1">
    <property type="nucleotide sequence ID" value="NZ_CP013197.1"/>
</dbReference>
<dbReference type="SMR" id="O31163"/>
<dbReference type="STRING" id="2133.SCITRI_00339"/>
<dbReference type="GeneID" id="97612163"/>
<dbReference type="OrthoDB" id="9815192at2"/>
<dbReference type="GO" id="GO:0022625">
    <property type="term" value="C:cytosolic large ribosomal subunit"/>
    <property type="evidence" value="ECO:0007669"/>
    <property type="project" value="TreeGrafter"/>
</dbReference>
<dbReference type="GO" id="GO:0003677">
    <property type="term" value="F:DNA binding"/>
    <property type="evidence" value="ECO:0007669"/>
    <property type="project" value="UniProtKB-KW"/>
</dbReference>
<dbReference type="GO" id="GO:0003735">
    <property type="term" value="F:structural constituent of ribosome"/>
    <property type="evidence" value="ECO:0007669"/>
    <property type="project" value="InterPro"/>
</dbReference>
<dbReference type="GO" id="GO:0006412">
    <property type="term" value="P:translation"/>
    <property type="evidence" value="ECO:0007669"/>
    <property type="project" value="UniProtKB-UniRule"/>
</dbReference>
<dbReference type="CDD" id="cd00427">
    <property type="entry name" value="Ribosomal_L29_HIP"/>
    <property type="match status" value="1"/>
</dbReference>
<dbReference type="FunFam" id="1.10.287.310:FF:000001">
    <property type="entry name" value="50S ribosomal protein L29"/>
    <property type="match status" value="1"/>
</dbReference>
<dbReference type="Gene3D" id="1.10.287.310">
    <property type="match status" value="1"/>
</dbReference>
<dbReference type="HAMAP" id="MF_00374">
    <property type="entry name" value="Ribosomal_uL29"/>
    <property type="match status" value="1"/>
</dbReference>
<dbReference type="InterPro" id="IPR050063">
    <property type="entry name" value="Ribosomal_protein_uL29"/>
</dbReference>
<dbReference type="InterPro" id="IPR001854">
    <property type="entry name" value="Ribosomal_uL29"/>
</dbReference>
<dbReference type="InterPro" id="IPR036049">
    <property type="entry name" value="Ribosomal_uL29_sf"/>
</dbReference>
<dbReference type="NCBIfam" id="TIGR00012">
    <property type="entry name" value="L29"/>
    <property type="match status" value="1"/>
</dbReference>
<dbReference type="PANTHER" id="PTHR10916">
    <property type="entry name" value="60S RIBOSOMAL PROTEIN L35/50S RIBOSOMAL PROTEIN L29"/>
    <property type="match status" value="1"/>
</dbReference>
<dbReference type="PANTHER" id="PTHR10916:SF0">
    <property type="entry name" value="LARGE RIBOSOMAL SUBUNIT PROTEIN UL29C"/>
    <property type="match status" value="1"/>
</dbReference>
<dbReference type="Pfam" id="PF00831">
    <property type="entry name" value="Ribosomal_L29"/>
    <property type="match status" value="1"/>
</dbReference>
<dbReference type="SUPFAM" id="SSF46561">
    <property type="entry name" value="Ribosomal protein L29 (L29p)"/>
    <property type="match status" value="1"/>
</dbReference>
<keyword id="KW-0903">Direct protein sequencing</keyword>
<keyword id="KW-0238">DNA-binding</keyword>
<keyword id="KW-0687">Ribonucleoprotein</keyword>
<keyword id="KW-0689">Ribosomal protein</keyword>